<reference key="1">
    <citation type="journal article" date="2008" name="J. Bacteriol.">
        <title>Complete genome sequence of Neisseria gonorrhoeae NCCP11945.</title>
        <authorList>
            <person name="Chung G.T."/>
            <person name="Yoo J.S."/>
            <person name="Oh H.B."/>
            <person name="Lee Y.S."/>
            <person name="Cha S.H."/>
            <person name="Kim S.J."/>
            <person name="Yoo C.K."/>
        </authorList>
    </citation>
    <scope>NUCLEOTIDE SEQUENCE [LARGE SCALE GENOMIC DNA]</scope>
    <source>
        <strain>NCCP11945</strain>
    </source>
</reference>
<accession>B4RLV8</accession>
<dbReference type="EC" id="3.6.4.-" evidence="1"/>
<dbReference type="EMBL" id="CP001050">
    <property type="protein sequence ID" value="ACF29795.1"/>
    <property type="molecule type" value="Genomic_DNA"/>
</dbReference>
<dbReference type="RefSeq" id="WP_003691202.1">
    <property type="nucleotide sequence ID" value="NC_011035.1"/>
</dbReference>
<dbReference type="SMR" id="B4RLV8"/>
<dbReference type="GeneID" id="66753102"/>
<dbReference type="KEGG" id="ngk:NGK_1118"/>
<dbReference type="HOGENOM" id="CLU_055599_1_0_4"/>
<dbReference type="Proteomes" id="UP000002564">
    <property type="component" value="Chromosome"/>
</dbReference>
<dbReference type="GO" id="GO:0005737">
    <property type="term" value="C:cytoplasm"/>
    <property type="evidence" value="ECO:0007669"/>
    <property type="project" value="UniProtKB-SubCell"/>
</dbReference>
<dbReference type="GO" id="GO:0048476">
    <property type="term" value="C:Holliday junction resolvase complex"/>
    <property type="evidence" value="ECO:0007669"/>
    <property type="project" value="UniProtKB-UniRule"/>
</dbReference>
<dbReference type="GO" id="GO:0005524">
    <property type="term" value="F:ATP binding"/>
    <property type="evidence" value="ECO:0007669"/>
    <property type="project" value="UniProtKB-UniRule"/>
</dbReference>
<dbReference type="GO" id="GO:0016887">
    <property type="term" value="F:ATP hydrolysis activity"/>
    <property type="evidence" value="ECO:0007669"/>
    <property type="project" value="InterPro"/>
</dbReference>
<dbReference type="GO" id="GO:0000400">
    <property type="term" value="F:four-way junction DNA binding"/>
    <property type="evidence" value="ECO:0007669"/>
    <property type="project" value="UniProtKB-UniRule"/>
</dbReference>
<dbReference type="GO" id="GO:0009378">
    <property type="term" value="F:four-way junction helicase activity"/>
    <property type="evidence" value="ECO:0007669"/>
    <property type="project" value="InterPro"/>
</dbReference>
<dbReference type="GO" id="GO:0006310">
    <property type="term" value="P:DNA recombination"/>
    <property type="evidence" value="ECO:0007669"/>
    <property type="project" value="UniProtKB-UniRule"/>
</dbReference>
<dbReference type="GO" id="GO:0006281">
    <property type="term" value="P:DNA repair"/>
    <property type="evidence" value="ECO:0007669"/>
    <property type="project" value="UniProtKB-UniRule"/>
</dbReference>
<dbReference type="CDD" id="cd00009">
    <property type="entry name" value="AAA"/>
    <property type="match status" value="1"/>
</dbReference>
<dbReference type="FunFam" id="1.10.10.10:FF:000086">
    <property type="entry name" value="Holliday junction ATP-dependent DNA helicase RuvB"/>
    <property type="match status" value="1"/>
</dbReference>
<dbReference type="FunFam" id="1.10.8.60:FF:000023">
    <property type="entry name" value="Holliday junction ATP-dependent DNA helicase RuvB"/>
    <property type="match status" value="1"/>
</dbReference>
<dbReference type="FunFam" id="3.40.50.300:FF:000073">
    <property type="entry name" value="Holliday junction ATP-dependent DNA helicase RuvB"/>
    <property type="match status" value="1"/>
</dbReference>
<dbReference type="Gene3D" id="1.10.8.60">
    <property type="match status" value="1"/>
</dbReference>
<dbReference type="Gene3D" id="3.40.50.300">
    <property type="entry name" value="P-loop containing nucleotide triphosphate hydrolases"/>
    <property type="match status" value="1"/>
</dbReference>
<dbReference type="Gene3D" id="1.10.10.10">
    <property type="entry name" value="Winged helix-like DNA-binding domain superfamily/Winged helix DNA-binding domain"/>
    <property type="match status" value="1"/>
</dbReference>
<dbReference type="HAMAP" id="MF_00016">
    <property type="entry name" value="DNA_HJ_migration_RuvB"/>
    <property type="match status" value="1"/>
</dbReference>
<dbReference type="InterPro" id="IPR003593">
    <property type="entry name" value="AAA+_ATPase"/>
</dbReference>
<dbReference type="InterPro" id="IPR041445">
    <property type="entry name" value="AAA_lid_4"/>
</dbReference>
<dbReference type="InterPro" id="IPR004605">
    <property type="entry name" value="DNA_helicase_Holl-junc_RuvB"/>
</dbReference>
<dbReference type="InterPro" id="IPR027417">
    <property type="entry name" value="P-loop_NTPase"/>
</dbReference>
<dbReference type="InterPro" id="IPR008824">
    <property type="entry name" value="RuvB-like_N"/>
</dbReference>
<dbReference type="InterPro" id="IPR008823">
    <property type="entry name" value="RuvB_C"/>
</dbReference>
<dbReference type="InterPro" id="IPR036388">
    <property type="entry name" value="WH-like_DNA-bd_sf"/>
</dbReference>
<dbReference type="InterPro" id="IPR036390">
    <property type="entry name" value="WH_DNA-bd_sf"/>
</dbReference>
<dbReference type="NCBIfam" id="NF000868">
    <property type="entry name" value="PRK00080.1"/>
    <property type="match status" value="1"/>
</dbReference>
<dbReference type="NCBIfam" id="TIGR00635">
    <property type="entry name" value="ruvB"/>
    <property type="match status" value="1"/>
</dbReference>
<dbReference type="PANTHER" id="PTHR42848">
    <property type="match status" value="1"/>
</dbReference>
<dbReference type="PANTHER" id="PTHR42848:SF1">
    <property type="entry name" value="HOLLIDAY JUNCTION BRANCH MIGRATION COMPLEX SUBUNIT RUVB"/>
    <property type="match status" value="1"/>
</dbReference>
<dbReference type="Pfam" id="PF17864">
    <property type="entry name" value="AAA_lid_4"/>
    <property type="match status" value="1"/>
</dbReference>
<dbReference type="Pfam" id="PF05491">
    <property type="entry name" value="RuvB_C"/>
    <property type="match status" value="1"/>
</dbReference>
<dbReference type="Pfam" id="PF05496">
    <property type="entry name" value="RuvB_N"/>
    <property type="match status" value="1"/>
</dbReference>
<dbReference type="SMART" id="SM00382">
    <property type="entry name" value="AAA"/>
    <property type="match status" value="1"/>
</dbReference>
<dbReference type="SUPFAM" id="SSF52540">
    <property type="entry name" value="P-loop containing nucleoside triphosphate hydrolases"/>
    <property type="match status" value="1"/>
</dbReference>
<dbReference type="SUPFAM" id="SSF46785">
    <property type="entry name" value="Winged helix' DNA-binding domain"/>
    <property type="match status" value="1"/>
</dbReference>
<name>RUVB_NEIG2</name>
<gene>
    <name evidence="1" type="primary">ruvB</name>
    <name type="ordered locus">NGK_1118</name>
</gene>
<protein>
    <recommendedName>
        <fullName evidence="1">Holliday junction branch migration complex subunit RuvB</fullName>
        <ecNumber evidence="1">3.6.4.-</ecNumber>
    </recommendedName>
</protein>
<proteinExistence type="inferred from homology"/>
<evidence type="ECO:0000255" key="1">
    <source>
        <dbReference type="HAMAP-Rule" id="MF_00016"/>
    </source>
</evidence>
<sequence>MLQTDNLTAAQPQRIVAAQTASAQEELLERALRPKTLDDYIGQHKAKEQLAIFIQAAKKRGEALDHVLLFGPPGLGKTTLAHIIAKELGVNLRQTSGPVLERAGDLAALLTNLDPHDVLFIDEIHRLSPVVEEILYPALEDYRLDIMIGEGPAARSVKIDLPPFTLVGATTRAGMLTNPLRDRFGIVSRLEFYENRDLTTIVSRSAQLLQLDMGEEGAMEVAKRSRGTPRIANRLLRRVRDFADVKNNGVIDAAVADAALSMLDVDAQGLDVMDRKFLEAVLHKFGGGPVGLDNVAAAIGESTDTIEDVIEPYLIQQGFLQRTPRGRMATERAYLHFGLPVEK</sequence>
<keyword id="KW-0067">ATP-binding</keyword>
<keyword id="KW-0963">Cytoplasm</keyword>
<keyword id="KW-0227">DNA damage</keyword>
<keyword id="KW-0233">DNA recombination</keyword>
<keyword id="KW-0234">DNA repair</keyword>
<keyword id="KW-0238">DNA-binding</keyword>
<keyword id="KW-0378">Hydrolase</keyword>
<keyword id="KW-0547">Nucleotide-binding</keyword>
<organism>
    <name type="scientific">Neisseria gonorrhoeae (strain NCCP11945)</name>
    <dbReference type="NCBI Taxonomy" id="521006"/>
    <lineage>
        <taxon>Bacteria</taxon>
        <taxon>Pseudomonadati</taxon>
        <taxon>Pseudomonadota</taxon>
        <taxon>Betaproteobacteria</taxon>
        <taxon>Neisseriales</taxon>
        <taxon>Neisseriaceae</taxon>
        <taxon>Neisseria</taxon>
    </lineage>
</organism>
<feature type="chain" id="PRO_1000089658" description="Holliday junction branch migration complex subunit RuvB">
    <location>
        <begin position="1"/>
        <end position="343"/>
    </location>
</feature>
<feature type="region of interest" description="Large ATPase domain (RuvB-L)" evidence="1">
    <location>
        <begin position="4"/>
        <end position="193"/>
    </location>
</feature>
<feature type="region of interest" description="Small ATPAse domain (RuvB-S)" evidence="1">
    <location>
        <begin position="194"/>
        <end position="264"/>
    </location>
</feature>
<feature type="region of interest" description="Head domain (RuvB-H)" evidence="1">
    <location>
        <begin position="267"/>
        <end position="343"/>
    </location>
</feature>
<feature type="binding site" evidence="1">
    <location>
        <position position="32"/>
    </location>
    <ligand>
        <name>ATP</name>
        <dbReference type="ChEBI" id="CHEBI:30616"/>
    </ligand>
</feature>
<feature type="binding site" evidence="1">
    <location>
        <position position="33"/>
    </location>
    <ligand>
        <name>ATP</name>
        <dbReference type="ChEBI" id="CHEBI:30616"/>
    </ligand>
</feature>
<feature type="binding site" evidence="1">
    <location>
        <position position="74"/>
    </location>
    <ligand>
        <name>ATP</name>
        <dbReference type="ChEBI" id="CHEBI:30616"/>
    </ligand>
</feature>
<feature type="binding site" evidence="1">
    <location>
        <position position="77"/>
    </location>
    <ligand>
        <name>ATP</name>
        <dbReference type="ChEBI" id="CHEBI:30616"/>
    </ligand>
</feature>
<feature type="binding site" evidence="1">
    <location>
        <position position="78"/>
    </location>
    <ligand>
        <name>ATP</name>
        <dbReference type="ChEBI" id="CHEBI:30616"/>
    </ligand>
</feature>
<feature type="binding site" evidence="1">
    <location>
        <position position="78"/>
    </location>
    <ligand>
        <name>Mg(2+)</name>
        <dbReference type="ChEBI" id="CHEBI:18420"/>
    </ligand>
</feature>
<feature type="binding site" evidence="1">
    <location>
        <position position="79"/>
    </location>
    <ligand>
        <name>ATP</name>
        <dbReference type="ChEBI" id="CHEBI:30616"/>
    </ligand>
</feature>
<feature type="binding site" evidence="1">
    <location>
        <begin position="140"/>
        <end position="142"/>
    </location>
    <ligand>
        <name>ATP</name>
        <dbReference type="ChEBI" id="CHEBI:30616"/>
    </ligand>
</feature>
<feature type="binding site" evidence="1">
    <location>
        <position position="183"/>
    </location>
    <ligand>
        <name>ATP</name>
        <dbReference type="ChEBI" id="CHEBI:30616"/>
    </ligand>
</feature>
<feature type="binding site" evidence="1">
    <location>
        <position position="193"/>
    </location>
    <ligand>
        <name>ATP</name>
        <dbReference type="ChEBI" id="CHEBI:30616"/>
    </ligand>
</feature>
<feature type="binding site" evidence="1">
    <location>
        <position position="230"/>
    </location>
    <ligand>
        <name>ATP</name>
        <dbReference type="ChEBI" id="CHEBI:30616"/>
    </ligand>
</feature>
<feature type="binding site" evidence="1">
    <location>
        <position position="322"/>
    </location>
    <ligand>
        <name>DNA</name>
        <dbReference type="ChEBI" id="CHEBI:16991"/>
    </ligand>
</feature>
<feature type="binding site" evidence="1">
    <location>
        <position position="327"/>
    </location>
    <ligand>
        <name>DNA</name>
        <dbReference type="ChEBI" id="CHEBI:16991"/>
    </ligand>
</feature>
<comment type="function">
    <text evidence="1">The RuvA-RuvB-RuvC complex processes Holliday junction (HJ) DNA during genetic recombination and DNA repair, while the RuvA-RuvB complex plays an important role in the rescue of blocked DNA replication forks via replication fork reversal (RFR). RuvA specifically binds to HJ cruciform DNA, conferring on it an open structure. The RuvB hexamer acts as an ATP-dependent pump, pulling dsDNA into and through the RuvAB complex. RuvB forms 2 homohexamers on either side of HJ DNA bound by 1 or 2 RuvA tetramers; 4 subunits per hexamer contact DNA at a time. Coordinated motions by a converter formed by DNA-disengaged RuvB subunits stimulates ATP hydrolysis and nucleotide exchange. Immobilization of the converter enables RuvB to convert the ATP-contained energy into a lever motion, pulling 2 nucleotides of DNA out of the RuvA tetramer per ATP hydrolyzed, thus driving DNA branch migration. The RuvB motors rotate together with the DNA substrate, which together with the progressing nucleotide cycle form the mechanistic basis for DNA recombination by continuous HJ branch migration. Branch migration allows RuvC to scan DNA until it finds its consensus sequence, where it cleaves and resolves cruciform DNA.</text>
</comment>
<comment type="catalytic activity">
    <reaction evidence="1">
        <text>ATP + H2O = ADP + phosphate + H(+)</text>
        <dbReference type="Rhea" id="RHEA:13065"/>
        <dbReference type="ChEBI" id="CHEBI:15377"/>
        <dbReference type="ChEBI" id="CHEBI:15378"/>
        <dbReference type="ChEBI" id="CHEBI:30616"/>
        <dbReference type="ChEBI" id="CHEBI:43474"/>
        <dbReference type="ChEBI" id="CHEBI:456216"/>
    </reaction>
</comment>
<comment type="subunit">
    <text evidence="1">Homohexamer. Forms an RuvA(8)-RuvB(12)-Holliday junction (HJ) complex. HJ DNA is sandwiched between 2 RuvA tetramers; dsDNA enters through RuvA and exits via RuvB. An RuvB hexamer assembles on each DNA strand where it exits the tetramer. Each RuvB hexamer is contacted by two RuvA subunits (via domain III) on 2 adjacent RuvB subunits; this complex drives branch migration. In the full resolvosome a probable DNA-RuvA(4)-RuvB(12)-RuvC(2) complex forms which resolves the HJ.</text>
</comment>
<comment type="subcellular location">
    <subcellularLocation>
        <location evidence="1">Cytoplasm</location>
    </subcellularLocation>
</comment>
<comment type="domain">
    <text evidence="1">Has 3 domains, the large (RuvB-L) and small ATPase (RuvB-S) domains and the C-terminal head (RuvB-H) domain. The head domain binds DNA, while the ATPase domains jointly bind ATP, ADP or are empty depending on the state of the subunit in the translocation cycle. During a single DNA translocation step the structure of each domain remains the same, but their relative positions change.</text>
</comment>
<comment type="similarity">
    <text evidence="1">Belongs to the RuvB family.</text>
</comment>